<comment type="function">
    <text evidence="1">NDH-1 shuttles electrons from an unknown electron donor, via FMN and iron-sulfur (Fe-S) centers, to quinones in the respiratory and/or the photosynthetic chain. The immediate electron acceptor for the enzyme in this species is believed to be plastoquinone. Couples the redox reaction to proton translocation, and thus conserves the redox energy in a proton gradient. Cyanobacterial NDH-1 also plays a role in inorganic carbon-concentration.</text>
</comment>
<comment type="catalytic activity">
    <reaction evidence="1">
        <text>a plastoquinone + NADH + (n+1) H(+)(in) = a plastoquinol + NAD(+) + n H(+)(out)</text>
        <dbReference type="Rhea" id="RHEA:42608"/>
        <dbReference type="Rhea" id="RHEA-COMP:9561"/>
        <dbReference type="Rhea" id="RHEA-COMP:9562"/>
        <dbReference type="ChEBI" id="CHEBI:15378"/>
        <dbReference type="ChEBI" id="CHEBI:17757"/>
        <dbReference type="ChEBI" id="CHEBI:57540"/>
        <dbReference type="ChEBI" id="CHEBI:57945"/>
        <dbReference type="ChEBI" id="CHEBI:62192"/>
    </reaction>
</comment>
<comment type="catalytic activity">
    <reaction evidence="1">
        <text>a plastoquinone + NADPH + (n+1) H(+)(in) = a plastoquinol + NADP(+) + n H(+)(out)</text>
        <dbReference type="Rhea" id="RHEA:42612"/>
        <dbReference type="Rhea" id="RHEA-COMP:9561"/>
        <dbReference type="Rhea" id="RHEA-COMP:9562"/>
        <dbReference type="ChEBI" id="CHEBI:15378"/>
        <dbReference type="ChEBI" id="CHEBI:17757"/>
        <dbReference type="ChEBI" id="CHEBI:57783"/>
        <dbReference type="ChEBI" id="CHEBI:58349"/>
        <dbReference type="ChEBI" id="CHEBI:62192"/>
    </reaction>
</comment>
<comment type="subunit">
    <text evidence="1">NDH-1 can be composed of about 15 different subunits; different subcomplexes with different compositions have been identified which probably have different functions.</text>
</comment>
<comment type="subcellular location">
    <subcellularLocation>
        <location evidence="1">Cellular thylakoid membrane</location>
        <topology evidence="1">Peripheral membrane protein</topology>
        <orientation evidence="1">Cytoplasmic side</orientation>
    </subcellularLocation>
</comment>
<comment type="similarity">
    <text evidence="1">Belongs to the complex I 49 kDa subunit family.</text>
</comment>
<gene>
    <name evidence="1" type="primary">ndhH</name>
    <name type="ordered locus">P9211_01901</name>
</gene>
<sequence>MSQLETRTEPMVVNFGPHHPSMHGVLRLVVTLDGEDVVDCEPVIGYLHRGMEKIAENRTNVMFVPYVSRMDYAAGMFYEAIVVNAPERLAKISVPKRASYIRVLMLELNRIANHLLWLGPFLADVGAQTPFFYIFREREMIYDLWEAATGQRLINNNYFRIGGVACDLPSGWLEKCTDFCKWFGPKIDEYEKLITNNPIFRRRIEGLGAISREEAINWSLSGPMLRASGVSWDLRKVDHYECYDDFDWSISTATEGDCFARYRVRIEEMRQSLKILLQACEMIPGGPTENLEASRMLEGKGSKFAGFDYQYVAKKVAPTFKIPDGELYTRLESGKGEIGVFIQGNNDVTPWRFKIRAADLNNLQILPHILKGAKVADIMAILGSIDVIMGSVDR</sequence>
<accession>A9BD33</accession>
<feature type="chain" id="PRO_0000371907" description="NAD(P)H-quinone oxidoreductase subunit H">
    <location>
        <begin position="1"/>
        <end position="394"/>
    </location>
</feature>
<protein>
    <recommendedName>
        <fullName evidence="1">NAD(P)H-quinone oxidoreductase subunit H</fullName>
        <ecNumber evidence="1">7.1.1.-</ecNumber>
    </recommendedName>
    <alternativeName>
        <fullName>NAD(P)H dehydrogenase subunit H</fullName>
    </alternativeName>
    <alternativeName>
        <fullName evidence="1">NADH-plastoquinone oxidoreductase subunit H</fullName>
    </alternativeName>
    <alternativeName>
        <fullName evidence="1">NDH-1 subunit H</fullName>
        <shortName evidence="1">NDH-H</shortName>
    </alternativeName>
</protein>
<organism>
    <name type="scientific">Prochlorococcus marinus (strain MIT 9211)</name>
    <dbReference type="NCBI Taxonomy" id="93059"/>
    <lineage>
        <taxon>Bacteria</taxon>
        <taxon>Bacillati</taxon>
        <taxon>Cyanobacteriota</taxon>
        <taxon>Cyanophyceae</taxon>
        <taxon>Synechococcales</taxon>
        <taxon>Prochlorococcaceae</taxon>
        <taxon>Prochlorococcus</taxon>
    </lineage>
</organism>
<evidence type="ECO:0000255" key="1">
    <source>
        <dbReference type="HAMAP-Rule" id="MF_01358"/>
    </source>
</evidence>
<reference key="1">
    <citation type="journal article" date="2007" name="PLoS Genet.">
        <title>Patterns and implications of gene gain and loss in the evolution of Prochlorococcus.</title>
        <authorList>
            <person name="Kettler G.C."/>
            <person name="Martiny A.C."/>
            <person name="Huang K."/>
            <person name="Zucker J."/>
            <person name="Coleman M.L."/>
            <person name="Rodrigue S."/>
            <person name="Chen F."/>
            <person name="Lapidus A."/>
            <person name="Ferriera S."/>
            <person name="Johnson J."/>
            <person name="Steglich C."/>
            <person name="Church G.M."/>
            <person name="Richardson P."/>
            <person name="Chisholm S.W."/>
        </authorList>
    </citation>
    <scope>NUCLEOTIDE SEQUENCE [LARGE SCALE GENOMIC DNA]</scope>
    <source>
        <strain>MIT 9211</strain>
    </source>
</reference>
<keyword id="KW-0472">Membrane</keyword>
<keyword id="KW-0520">NAD</keyword>
<keyword id="KW-0521">NADP</keyword>
<keyword id="KW-0618">Plastoquinone</keyword>
<keyword id="KW-0874">Quinone</keyword>
<keyword id="KW-1185">Reference proteome</keyword>
<keyword id="KW-0793">Thylakoid</keyword>
<keyword id="KW-1278">Translocase</keyword>
<keyword id="KW-0813">Transport</keyword>
<proteinExistence type="inferred from homology"/>
<name>NDHH_PROM4</name>
<dbReference type="EC" id="7.1.1.-" evidence="1"/>
<dbReference type="EMBL" id="CP000878">
    <property type="protein sequence ID" value="ABX08121.1"/>
    <property type="molecule type" value="Genomic_DNA"/>
</dbReference>
<dbReference type="RefSeq" id="WP_012194746.1">
    <property type="nucleotide sequence ID" value="NC_009976.1"/>
</dbReference>
<dbReference type="SMR" id="A9BD33"/>
<dbReference type="STRING" id="93059.P9211_01901"/>
<dbReference type="KEGG" id="pmj:P9211_01901"/>
<dbReference type="eggNOG" id="COG0649">
    <property type="taxonomic scope" value="Bacteria"/>
</dbReference>
<dbReference type="HOGENOM" id="CLU_015134_1_2_3"/>
<dbReference type="OrthoDB" id="9801496at2"/>
<dbReference type="Proteomes" id="UP000000788">
    <property type="component" value="Chromosome"/>
</dbReference>
<dbReference type="GO" id="GO:0031676">
    <property type="term" value="C:plasma membrane-derived thylakoid membrane"/>
    <property type="evidence" value="ECO:0007669"/>
    <property type="project" value="UniProtKB-SubCell"/>
</dbReference>
<dbReference type="GO" id="GO:0051287">
    <property type="term" value="F:NAD binding"/>
    <property type="evidence" value="ECO:0007669"/>
    <property type="project" value="InterPro"/>
</dbReference>
<dbReference type="GO" id="GO:0016655">
    <property type="term" value="F:oxidoreductase activity, acting on NAD(P)H, quinone or similar compound as acceptor"/>
    <property type="evidence" value="ECO:0007669"/>
    <property type="project" value="UniProtKB-UniRule"/>
</dbReference>
<dbReference type="GO" id="GO:0048038">
    <property type="term" value="F:quinone binding"/>
    <property type="evidence" value="ECO:0007669"/>
    <property type="project" value="UniProtKB-KW"/>
</dbReference>
<dbReference type="GO" id="GO:0019684">
    <property type="term" value="P:photosynthesis, light reaction"/>
    <property type="evidence" value="ECO:0007669"/>
    <property type="project" value="UniProtKB-UniRule"/>
</dbReference>
<dbReference type="Gene3D" id="1.10.645.10">
    <property type="entry name" value="Cytochrome-c3 Hydrogenase, chain B"/>
    <property type="match status" value="1"/>
</dbReference>
<dbReference type="HAMAP" id="MF_01358">
    <property type="entry name" value="NDH1_NuoD"/>
    <property type="match status" value="1"/>
</dbReference>
<dbReference type="InterPro" id="IPR001135">
    <property type="entry name" value="NADH_Q_OxRdtase_suD"/>
</dbReference>
<dbReference type="InterPro" id="IPR014029">
    <property type="entry name" value="NADH_UbQ_OxRdtase_49kDa_CS"/>
</dbReference>
<dbReference type="InterPro" id="IPR022885">
    <property type="entry name" value="NDH1_su_D/H"/>
</dbReference>
<dbReference type="InterPro" id="IPR029014">
    <property type="entry name" value="NiFe-Hase_large"/>
</dbReference>
<dbReference type="NCBIfam" id="NF004739">
    <property type="entry name" value="PRK06075.1"/>
    <property type="match status" value="1"/>
</dbReference>
<dbReference type="NCBIfam" id="NF005649">
    <property type="entry name" value="PRK07415.1"/>
    <property type="match status" value="1"/>
</dbReference>
<dbReference type="PANTHER" id="PTHR11993:SF10">
    <property type="entry name" value="NADH DEHYDROGENASE [UBIQUINONE] IRON-SULFUR PROTEIN 2, MITOCHONDRIAL"/>
    <property type="match status" value="1"/>
</dbReference>
<dbReference type="PANTHER" id="PTHR11993">
    <property type="entry name" value="NADH-UBIQUINONE OXIDOREDUCTASE 49 KDA SUBUNIT"/>
    <property type="match status" value="1"/>
</dbReference>
<dbReference type="Pfam" id="PF00346">
    <property type="entry name" value="Complex1_49kDa"/>
    <property type="match status" value="1"/>
</dbReference>
<dbReference type="SUPFAM" id="SSF56762">
    <property type="entry name" value="HydB/Nqo4-like"/>
    <property type="match status" value="1"/>
</dbReference>
<dbReference type="PROSITE" id="PS00535">
    <property type="entry name" value="COMPLEX1_49K"/>
    <property type="match status" value="1"/>
</dbReference>